<keyword id="KW-0963">Cytoplasm</keyword>
<keyword id="KW-0489">Methyltransferase</keyword>
<keyword id="KW-0539">Nucleus</keyword>
<keyword id="KW-0597">Phosphoprotein</keyword>
<keyword id="KW-1185">Reference proteome</keyword>
<keyword id="KW-0949">S-adenosyl-L-methionine</keyword>
<keyword id="KW-0808">Transferase</keyword>
<dbReference type="EC" id="2.1.1.-" evidence="3 7"/>
<dbReference type="EMBL" id="U33050">
    <property type="protein sequence ID" value="AAB64933.1"/>
    <property type="molecule type" value="Genomic_DNA"/>
</dbReference>
<dbReference type="EMBL" id="BK006938">
    <property type="protein sequence ID" value="DAA12300.1"/>
    <property type="molecule type" value="Genomic_DNA"/>
</dbReference>
<dbReference type="PIR" id="S69633">
    <property type="entry name" value="S69633"/>
</dbReference>
<dbReference type="RefSeq" id="NP_010753.1">
    <property type="nucleotide sequence ID" value="NM_001180773.1"/>
</dbReference>
<dbReference type="SMR" id="Q03305"/>
<dbReference type="BioGRID" id="32519">
    <property type="interactions" value="62"/>
</dbReference>
<dbReference type="DIP" id="DIP-4490N"/>
<dbReference type="FunCoup" id="Q03305">
    <property type="interactions" value="482"/>
</dbReference>
<dbReference type="IntAct" id="Q03305">
    <property type="interactions" value="8"/>
</dbReference>
<dbReference type="STRING" id="4932.YDR465C"/>
<dbReference type="iPTMnet" id="Q03305"/>
<dbReference type="PaxDb" id="4932-YDR465C"/>
<dbReference type="PeptideAtlas" id="Q03305"/>
<dbReference type="EnsemblFungi" id="YDR465C_mRNA">
    <property type="protein sequence ID" value="YDR465C"/>
    <property type="gene ID" value="YDR465C"/>
</dbReference>
<dbReference type="GeneID" id="852076"/>
<dbReference type="KEGG" id="sce:YDR465C"/>
<dbReference type="AGR" id="SGD:S000002873"/>
<dbReference type="SGD" id="S000002873">
    <property type="gene designation" value="RMT2"/>
</dbReference>
<dbReference type="VEuPathDB" id="FungiDB:YDR465C"/>
<dbReference type="eggNOG" id="KOG1709">
    <property type="taxonomic scope" value="Eukaryota"/>
</dbReference>
<dbReference type="HOGENOM" id="CLU_033831_0_0_1"/>
<dbReference type="InParanoid" id="Q03305"/>
<dbReference type="OMA" id="NYYYHPR"/>
<dbReference type="OrthoDB" id="19014at2759"/>
<dbReference type="BioCyc" id="MetaCyc:G3O-29993-MONOMER"/>
<dbReference type="BioCyc" id="YEAST:G3O-29993-MONOMER"/>
<dbReference type="BRENDA" id="2.1.1.322">
    <property type="organism ID" value="984"/>
</dbReference>
<dbReference type="Reactome" id="R-SCE-71288">
    <property type="pathway name" value="Creatine metabolism"/>
</dbReference>
<dbReference type="BioGRID-ORCS" id="852076">
    <property type="hits" value="0 hits in 10 CRISPR screens"/>
</dbReference>
<dbReference type="PRO" id="PR:Q03305"/>
<dbReference type="Proteomes" id="UP000002311">
    <property type="component" value="Chromosome IV"/>
</dbReference>
<dbReference type="RNAct" id="Q03305">
    <property type="molecule type" value="protein"/>
</dbReference>
<dbReference type="GO" id="GO:0005737">
    <property type="term" value="C:cytoplasm"/>
    <property type="evidence" value="ECO:0000314"/>
    <property type="project" value="SGD"/>
</dbReference>
<dbReference type="GO" id="GO:0005634">
    <property type="term" value="C:nucleus"/>
    <property type="evidence" value="ECO:0000314"/>
    <property type="project" value="SGD"/>
</dbReference>
<dbReference type="GO" id="GO:0019702">
    <property type="term" value="F:protein arginine N5-methyltransferase activity"/>
    <property type="evidence" value="ECO:0000314"/>
    <property type="project" value="SGD"/>
</dbReference>
<dbReference type="GO" id="GO:0032259">
    <property type="term" value="P:methylation"/>
    <property type="evidence" value="ECO:0007669"/>
    <property type="project" value="UniProtKB-KW"/>
</dbReference>
<dbReference type="CDD" id="cd02440">
    <property type="entry name" value="AdoMet_MTases"/>
    <property type="match status" value="1"/>
</dbReference>
<dbReference type="FunFam" id="3.40.50.150:FF:000310">
    <property type="entry name" value="Arginine N-methyltransferase 2"/>
    <property type="match status" value="1"/>
</dbReference>
<dbReference type="Gene3D" id="3.40.50.150">
    <property type="entry name" value="Vaccinia Virus protein VP39"/>
    <property type="match status" value="1"/>
</dbReference>
<dbReference type="InterPro" id="IPR017408">
    <property type="entry name" value="Arginine_N-MeTrfase_2"/>
</dbReference>
<dbReference type="InterPro" id="IPR051038">
    <property type="entry name" value="RMT2/GAMT_Mtase"/>
</dbReference>
<dbReference type="InterPro" id="IPR026480">
    <property type="entry name" value="RMT2_dom"/>
</dbReference>
<dbReference type="InterPro" id="IPR029063">
    <property type="entry name" value="SAM-dependent_MTases_sf"/>
</dbReference>
<dbReference type="PANTHER" id="PTHR32379">
    <property type="entry name" value="GUANIDINOACETATE N-METHYLTRANSFERASE"/>
    <property type="match status" value="1"/>
</dbReference>
<dbReference type="PANTHER" id="PTHR32379:SF1">
    <property type="entry name" value="GUANIDINOACETATE N-METHYLTRANSFERASE"/>
    <property type="match status" value="1"/>
</dbReference>
<dbReference type="PIRSF" id="PIRSF038148">
    <property type="entry name" value="Arginine_N-mtfrase-2"/>
    <property type="match status" value="1"/>
</dbReference>
<dbReference type="SUPFAM" id="SSF53335">
    <property type="entry name" value="S-adenosyl-L-methionine-dependent methyltransferases"/>
    <property type="match status" value="1"/>
</dbReference>
<dbReference type="PROSITE" id="PS51559">
    <property type="entry name" value="SAM_RMT2"/>
    <property type="match status" value="1"/>
</dbReference>
<comment type="function">
    <text evidence="3 7">S-adenosyl-L-methionine-dependent protein-arginine N-methyltransferase that methylates the delta-nitrogen atom of arginine residues to form N5-methylarginine (type IV) in target proteins (PubMed:9873020). Monomethylates ribosomal protein L12 (RPL12A/RPL12B) at 'Arg-67' (PubMed:11856739).</text>
</comment>
<comment type="subunit">
    <text evidence="3 6">Monomer. Interacts with nucleoporins NUP49, NUP57 and NUP100.</text>
</comment>
<comment type="subcellular location">
    <subcellularLocation>
        <location evidence="4 6">Cytoplasm</location>
    </subcellularLocation>
    <subcellularLocation>
        <location evidence="4 6">Nucleus</location>
    </subcellularLocation>
    <text evidence="6">Appears often very close to the nuclear membrane and the nuclear pores.</text>
</comment>
<comment type="mass spectrometry" mass="47339.0" error="2.0" method="Electrospray" evidence="3">
    <text>Measured from a recombinant protein expressed in E.coli.</text>
</comment>
<comment type="miscellaneous">
    <text evidence="5">Present with 1600 molecules/cell in log phase SD medium.</text>
</comment>
<comment type="similarity">
    <text evidence="1">Belongs to the class I-like SAM-binding methyltransferase superfamily. RMT2 methyltransferase family.</text>
</comment>
<feature type="chain" id="PRO_0000228980" description="Protein arginine N-methyltransferase 2">
    <location>
        <begin position="1"/>
        <end position="412"/>
    </location>
</feature>
<feature type="domain" description="RMT2" evidence="1">
    <location>
        <begin position="189"/>
        <end position="412"/>
    </location>
</feature>
<feature type="region of interest" description="Disordered" evidence="2">
    <location>
        <begin position="48"/>
        <end position="69"/>
    </location>
</feature>
<feature type="region of interest" description="Disordered" evidence="2">
    <location>
        <begin position="169"/>
        <end position="189"/>
    </location>
</feature>
<feature type="compositionally biased region" description="Basic and acidic residues" evidence="2">
    <location>
        <begin position="48"/>
        <end position="65"/>
    </location>
</feature>
<feature type="binding site" evidence="1">
    <location>
        <position position="196"/>
    </location>
    <ligand>
        <name>S-adenosyl-L-methionine</name>
        <dbReference type="ChEBI" id="CHEBI:59789"/>
    </ligand>
</feature>
<feature type="binding site" evidence="1">
    <location>
        <position position="226"/>
    </location>
    <ligand>
        <name>S-adenosyl-L-methionine</name>
        <dbReference type="ChEBI" id="CHEBI:59789"/>
    </ligand>
</feature>
<feature type="binding site" evidence="1">
    <location>
        <begin position="250"/>
        <end position="255"/>
    </location>
    <ligand>
        <name>S-adenosyl-L-methionine</name>
        <dbReference type="ChEBI" id="CHEBI:59789"/>
    </ligand>
</feature>
<feature type="binding site" evidence="1">
    <location>
        <begin position="271"/>
        <end position="273"/>
    </location>
    <ligand>
        <name>S-adenosyl-L-methionine</name>
        <dbReference type="ChEBI" id="CHEBI:59789"/>
    </ligand>
</feature>
<feature type="binding site" evidence="1">
    <location>
        <begin position="298"/>
        <end position="299"/>
    </location>
    <ligand>
        <name>S-adenosyl-L-methionine</name>
        <dbReference type="ChEBI" id="CHEBI:59789"/>
    </ligand>
</feature>
<feature type="binding site" evidence="1">
    <location>
        <position position="319"/>
    </location>
    <ligand>
        <name>S-adenosyl-L-methionine</name>
        <dbReference type="ChEBI" id="CHEBI:59789"/>
    </ligand>
</feature>
<feature type="modified residue" description="Phosphoserine" evidence="13 14">
    <location>
        <position position="181"/>
    </location>
</feature>
<feature type="modified residue" description="Phosphoserine" evidence="13 14">
    <location>
        <position position="184"/>
    </location>
</feature>
<sequence length="412" mass="47469">MSELHALLTFPERPISQSYYVPKLQHFLKSGIPATYTLEQVAAFEHEEKNRNGDKEFRESTDDNKTSNTTPLHVLARSLPLDIKDEELQVVMDMMNILFEYGAGWNFIDYEDKTVGDLFLERNQSRESPLYRRLVEAGVSAELLLRKLNGGDVEFLDTDELIGIEPEESVQTAVDGQKEESVGSDDDATAANQQVYLKTELEYKDDALITKENKDGVMMDWETKIMELASETLFPDPEATNSATILNIGFGMGIIDTFIQARKPYRHYICEAHPDVLAKMKMDGWYEKDNVVILEGRWQDTLNNLLDKGEVFFDGIYYDTFSEHYQDILDLYDVVVGLIKPEGVFSFFNGLGADRSLCYDVYKEIVEIDVATYGMKCDYTRYSLDEQLPDWNDVKRSYFNCNYYYHPRITFA</sequence>
<evidence type="ECO:0000255" key="1">
    <source>
        <dbReference type="PROSITE-ProRule" id="PRU00892"/>
    </source>
</evidence>
<evidence type="ECO:0000256" key="2">
    <source>
        <dbReference type="SAM" id="MobiDB-lite"/>
    </source>
</evidence>
<evidence type="ECO:0000269" key="3">
    <source>
    </source>
</evidence>
<evidence type="ECO:0000269" key="4">
    <source>
    </source>
</evidence>
<evidence type="ECO:0000269" key="5">
    <source>
    </source>
</evidence>
<evidence type="ECO:0000269" key="6">
    <source>
    </source>
</evidence>
<evidence type="ECO:0000269" key="7">
    <source>
    </source>
</evidence>
<evidence type="ECO:0000303" key="8">
    <source>
    </source>
</evidence>
<evidence type="ECO:0000303" key="9">
    <source>
    </source>
</evidence>
<evidence type="ECO:0000305" key="10">
    <source>
    </source>
</evidence>
<evidence type="ECO:0000305" key="11">
    <source>
    </source>
</evidence>
<evidence type="ECO:0000312" key="12">
    <source>
        <dbReference type="SGD" id="S000002873"/>
    </source>
</evidence>
<evidence type="ECO:0007744" key="13">
    <source>
    </source>
</evidence>
<evidence type="ECO:0007744" key="14">
    <source>
    </source>
</evidence>
<name>RMT2_YEAST</name>
<protein>
    <recommendedName>
        <fullName evidence="9">Protein arginine N-methyltransferase 2</fullName>
        <ecNumber evidence="3 7">2.1.1.-</ecNumber>
    </recommendedName>
    <alternativeName>
        <fullName evidence="11">Protein-arginine N5-methyltransferase</fullName>
    </alternativeName>
    <alternativeName>
        <fullName evidence="8">Type IV protein arginine N-methyltransferase</fullName>
        <shortName evidence="10">Type IV PRMT</shortName>
    </alternativeName>
</protein>
<proteinExistence type="evidence at protein level"/>
<accession>Q03305</accession>
<accession>D6VT90</accession>
<gene>
    <name evidence="9" type="primary">RMT2</name>
    <name evidence="12" type="ordered locus">YDR465C</name>
</gene>
<reference key="1">
    <citation type="journal article" date="1997" name="Nature">
        <title>The nucleotide sequence of Saccharomyces cerevisiae chromosome IV.</title>
        <authorList>
            <person name="Jacq C."/>
            <person name="Alt-Moerbe J."/>
            <person name="Andre B."/>
            <person name="Arnold W."/>
            <person name="Bahr A."/>
            <person name="Ballesta J.P.G."/>
            <person name="Bargues M."/>
            <person name="Baron L."/>
            <person name="Becker A."/>
            <person name="Biteau N."/>
            <person name="Bloecker H."/>
            <person name="Blugeon C."/>
            <person name="Boskovic J."/>
            <person name="Brandt P."/>
            <person name="Brueckner M."/>
            <person name="Buitrago M.J."/>
            <person name="Coster F."/>
            <person name="Delaveau T."/>
            <person name="del Rey F."/>
            <person name="Dujon B."/>
            <person name="Eide L.G."/>
            <person name="Garcia-Cantalejo J.M."/>
            <person name="Goffeau A."/>
            <person name="Gomez-Peris A."/>
            <person name="Granotier C."/>
            <person name="Hanemann V."/>
            <person name="Hankeln T."/>
            <person name="Hoheisel J.D."/>
            <person name="Jaeger W."/>
            <person name="Jimenez A."/>
            <person name="Jonniaux J.-L."/>
            <person name="Kraemer C."/>
            <person name="Kuester H."/>
            <person name="Laamanen P."/>
            <person name="Legros Y."/>
            <person name="Louis E.J."/>
            <person name="Moeller-Rieker S."/>
            <person name="Monnet A."/>
            <person name="Moro M."/>
            <person name="Mueller-Auer S."/>
            <person name="Nussbaumer B."/>
            <person name="Paricio N."/>
            <person name="Paulin L."/>
            <person name="Perea J."/>
            <person name="Perez-Alonso M."/>
            <person name="Perez-Ortin J.E."/>
            <person name="Pohl T.M."/>
            <person name="Prydz H."/>
            <person name="Purnelle B."/>
            <person name="Rasmussen S.W."/>
            <person name="Remacha M.A."/>
            <person name="Revuelta J.L."/>
            <person name="Rieger M."/>
            <person name="Salom D."/>
            <person name="Saluz H.P."/>
            <person name="Saiz J.E."/>
            <person name="Saren A.-M."/>
            <person name="Schaefer M."/>
            <person name="Scharfe M."/>
            <person name="Schmidt E.R."/>
            <person name="Schneider C."/>
            <person name="Scholler P."/>
            <person name="Schwarz S."/>
            <person name="Soler-Mira A."/>
            <person name="Urrestarazu L.A."/>
            <person name="Verhasselt P."/>
            <person name="Vissers S."/>
            <person name="Voet M."/>
            <person name="Volckaert G."/>
            <person name="Wagner G."/>
            <person name="Wambutt R."/>
            <person name="Wedler E."/>
            <person name="Wedler H."/>
            <person name="Woelfl S."/>
            <person name="Harris D.E."/>
            <person name="Bowman S."/>
            <person name="Brown D."/>
            <person name="Churcher C.M."/>
            <person name="Connor R."/>
            <person name="Dedman K."/>
            <person name="Gentles S."/>
            <person name="Hamlin N."/>
            <person name="Hunt S."/>
            <person name="Jones L."/>
            <person name="McDonald S."/>
            <person name="Murphy L.D."/>
            <person name="Niblett D."/>
            <person name="Odell C."/>
            <person name="Oliver K."/>
            <person name="Rajandream M.A."/>
            <person name="Richards C."/>
            <person name="Shore L."/>
            <person name="Walsh S.V."/>
            <person name="Barrell B.G."/>
            <person name="Dietrich F.S."/>
            <person name="Mulligan J.T."/>
            <person name="Allen E."/>
            <person name="Araujo R."/>
            <person name="Aviles E."/>
            <person name="Berno A."/>
            <person name="Carpenter J."/>
            <person name="Chen E."/>
            <person name="Cherry J.M."/>
            <person name="Chung E."/>
            <person name="Duncan M."/>
            <person name="Hunicke-Smith S."/>
            <person name="Hyman R.W."/>
            <person name="Komp C."/>
            <person name="Lashkari D."/>
            <person name="Lew H."/>
            <person name="Lin D."/>
            <person name="Mosedale D."/>
            <person name="Nakahara K."/>
            <person name="Namath A."/>
            <person name="Oefner P."/>
            <person name="Oh C."/>
            <person name="Petel F.X."/>
            <person name="Roberts D."/>
            <person name="Schramm S."/>
            <person name="Schroeder M."/>
            <person name="Shogren T."/>
            <person name="Shroff N."/>
            <person name="Winant A."/>
            <person name="Yelton M.A."/>
            <person name="Botstein D."/>
            <person name="Davis R.W."/>
            <person name="Johnston M."/>
            <person name="Andrews S."/>
            <person name="Brinkman R."/>
            <person name="Cooper J."/>
            <person name="Ding H."/>
            <person name="Du Z."/>
            <person name="Favello A."/>
            <person name="Fulton L."/>
            <person name="Gattung S."/>
            <person name="Greco T."/>
            <person name="Hallsworth K."/>
            <person name="Hawkins J."/>
            <person name="Hillier L.W."/>
            <person name="Jier M."/>
            <person name="Johnson D."/>
            <person name="Johnston L."/>
            <person name="Kirsten J."/>
            <person name="Kucaba T."/>
            <person name="Langston Y."/>
            <person name="Latreille P."/>
            <person name="Le T."/>
            <person name="Mardis E."/>
            <person name="Menezes S."/>
            <person name="Miller N."/>
            <person name="Nhan M."/>
            <person name="Pauley A."/>
            <person name="Peluso D."/>
            <person name="Rifkin L."/>
            <person name="Riles L."/>
            <person name="Taich A."/>
            <person name="Trevaskis E."/>
            <person name="Vignati D."/>
            <person name="Wilcox L."/>
            <person name="Wohldman P."/>
            <person name="Vaudin M."/>
            <person name="Wilson R."/>
            <person name="Waterston R."/>
            <person name="Albermann K."/>
            <person name="Hani J."/>
            <person name="Heumann K."/>
            <person name="Kleine K."/>
            <person name="Mewes H.-W."/>
            <person name="Zollner A."/>
            <person name="Zaccaria P."/>
        </authorList>
    </citation>
    <scope>NUCLEOTIDE SEQUENCE [LARGE SCALE GENOMIC DNA]</scope>
    <source>
        <strain>ATCC 204508 / S288c</strain>
    </source>
</reference>
<reference key="2">
    <citation type="journal article" date="2014" name="G3 (Bethesda)">
        <title>The reference genome sequence of Saccharomyces cerevisiae: Then and now.</title>
        <authorList>
            <person name="Engel S.R."/>
            <person name="Dietrich F.S."/>
            <person name="Fisk D.G."/>
            <person name="Binkley G."/>
            <person name="Balakrishnan R."/>
            <person name="Costanzo M.C."/>
            <person name="Dwight S.S."/>
            <person name="Hitz B.C."/>
            <person name="Karra K."/>
            <person name="Nash R.S."/>
            <person name="Weng S."/>
            <person name="Wong E.D."/>
            <person name="Lloyd P."/>
            <person name="Skrzypek M.S."/>
            <person name="Miyasato S.R."/>
            <person name="Simison M."/>
            <person name="Cherry J.M."/>
        </authorList>
    </citation>
    <scope>GENOME REANNOTATION</scope>
    <source>
        <strain>ATCC 204508 / S288c</strain>
    </source>
</reference>
<reference key="3">
    <citation type="journal article" date="1999" name="J. Biol. Chem.">
        <title>S-adenosylmethionine-dependent methylation in Saccharomyces cerevisiae. Identification of a novel protein arginine methyltransferase.</title>
        <authorList>
            <person name="Niewmierzycka A."/>
            <person name="Clarke S."/>
        </authorList>
    </citation>
    <scope>FUNCTION</scope>
    <scope>CATALYTIC ACTIVITY</scope>
</reference>
<reference key="4">
    <citation type="journal article" date="2002" name="J. Biol. Chem.">
        <title>Yeast ribosomal protein L12 is a substrate of protein-arginine methyltransferase 2.</title>
        <authorList>
            <person name="Chern M.-K."/>
            <person name="Chang K.-N."/>
            <person name="Liu L.-F."/>
            <person name="Tam T.-C.S."/>
            <person name="Liu Y.-C."/>
            <person name="Liang Y.-L."/>
            <person name="Tam M.F."/>
        </authorList>
    </citation>
    <scope>FUNCTION</scope>
    <scope>SUBUNIT</scope>
    <scope>MASS SPECTROMETRY</scope>
    <scope>CATALYTIC ACTIVITY</scope>
</reference>
<reference key="5">
    <citation type="journal article" date="2003" name="Nature">
        <title>Global analysis of protein localization in budding yeast.</title>
        <authorList>
            <person name="Huh W.-K."/>
            <person name="Falvo J.V."/>
            <person name="Gerke L.C."/>
            <person name="Carroll A.S."/>
            <person name="Howson R.W."/>
            <person name="Weissman J.S."/>
            <person name="O'Shea E.K."/>
        </authorList>
    </citation>
    <scope>SUBCELLULAR LOCATION [LARGE SCALE ANALYSIS]</scope>
</reference>
<reference key="6">
    <citation type="journal article" date="2003" name="Nature">
        <title>Global analysis of protein expression in yeast.</title>
        <authorList>
            <person name="Ghaemmaghami S."/>
            <person name="Huh W.-K."/>
            <person name="Bower K."/>
            <person name="Howson R.W."/>
            <person name="Belle A."/>
            <person name="Dephoure N."/>
            <person name="O'Shea E.K."/>
            <person name="Weissman J.S."/>
        </authorList>
    </citation>
    <scope>LEVEL OF PROTEIN EXPRESSION [LARGE SCALE ANALYSIS]</scope>
</reference>
<reference key="7">
    <citation type="journal article" date="2007" name="Exp. Cell Res.">
        <title>The arginine methyltransferase Rmt2 is enriched in the nucleus and co-purifies with the nuclear porins Nup49, Nup57 and Nup100.</title>
        <authorList>
            <person name="Olsson I."/>
            <person name="Berrez J.M."/>
            <person name="Leipus A."/>
            <person name="Ostlund C."/>
            <person name="Mutvei A."/>
        </authorList>
    </citation>
    <scope>SUBCELLULAR LOCATION</scope>
    <scope>INTERACTION WITH NUP49; NUP57 AND NUP100</scope>
</reference>
<reference key="8">
    <citation type="journal article" date="2007" name="J. Proteome Res.">
        <title>Large-scale phosphorylation analysis of alpha-factor-arrested Saccharomyces cerevisiae.</title>
        <authorList>
            <person name="Li X."/>
            <person name="Gerber S.A."/>
            <person name="Rudner A.D."/>
            <person name="Beausoleil S.A."/>
            <person name="Haas W."/>
            <person name="Villen J."/>
            <person name="Elias J.E."/>
            <person name="Gygi S.P."/>
        </authorList>
    </citation>
    <scope>PHOSPHORYLATION [LARGE SCALE ANALYSIS] AT SER-181 AND SER-184</scope>
    <scope>IDENTIFICATION BY MASS SPECTROMETRY [LARGE SCALE ANALYSIS]</scope>
    <source>
        <strain>ADR376</strain>
    </source>
</reference>
<reference key="9">
    <citation type="journal article" date="2009" name="Science">
        <title>Global analysis of Cdk1 substrate phosphorylation sites provides insights into evolution.</title>
        <authorList>
            <person name="Holt L.J."/>
            <person name="Tuch B.B."/>
            <person name="Villen J."/>
            <person name="Johnson A.D."/>
            <person name="Gygi S.P."/>
            <person name="Morgan D.O."/>
        </authorList>
    </citation>
    <scope>PHOSPHORYLATION [LARGE SCALE ANALYSIS] AT SER-181 AND SER-184</scope>
    <scope>IDENTIFICATION BY MASS SPECTROMETRY [LARGE SCALE ANALYSIS]</scope>
</reference>
<organism>
    <name type="scientific">Saccharomyces cerevisiae (strain ATCC 204508 / S288c)</name>
    <name type="common">Baker's yeast</name>
    <dbReference type="NCBI Taxonomy" id="559292"/>
    <lineage>
        <taxon>Eukaryota</taxon>
        <taxon>Fungi</taxon>
        <taxon>Dikarya</taxon>
        <taxon>Ascomycota</taxon>
        <taxon>Saccharomycotina</taxon>
        <taxon>Saccharomycetes</taxon>
        <taxon>Saccharomycetales</taxon>
        <taxon>Saccharomycetaceae</taxon>
        <taxon>Saccharomyces</taxon>
    </lineage>
</organism>